<evidence type="ECO:0000255" key="1">
    <source>
        <dbReference type="HAMAP-Rule" id="MF_00151"/>
    </source>
</evidence>
<accession>B9EB42</accession>
<name>COAD_MACCJ</name>
<reference key="1">
    <citation type="journal article" date="2009" name="J. Bacteriol.">
        <title>Complete genome sequence of Macrococcus caseolyticus strain JCSCS5402, reflecting the ancestral genome of the human-pathogenic staphylococci.</title>
        <authorList>
            <person name="Baba T."/>
            <person name="Kuwahara-Arai K."/>
            <person name="Uchiyama I."/>
            <person name="Takeuchi F."/>
            <person name="Ito T."/>
            <person name="Hiramatsu K."/>
        </authorList>
    </citation>
    <scope>NUCLEOTIDE SEQUENCE [LARGE SCALE GENOMIC DNA]</scope>
    <source>
        <strain>JCSC5402</strain>
    </source>
</reference>
<protein>
    <recommendedName>
        <fullName evidence="1">Phosphopantetheine adenylyltransferase</fullName>
        <ecNumber evidence="1">2.7.7.3</ecNumber>
    </recommendedName>
    <alternativeName>
        <fullName evidence="1">Dephospho-CoA pyrophosphorylase</fullName>
    </alternativeName>
    <alternativeName>
        <fullName evidence="1">Pantetheine-phosphate adenylyltransferase</fullName>
        <shortName evidence="1">PPAT</shortName>
    </alternativeName>
</protein>
<comment type="function">
    <text evidence="1">Reversibly transfers an adenylyl group from ATP to 4'-phosphopantetheine, yielding dephospho-CoA (dPCoA) and pyrophosphate.</text>
</comment>
<comment type="catalytic activity">
    <reaction evidence="1">
        <text>(R)-4'-phosphopantetheine + ATP + H(+) = 3'-dephospho-CoA + diphosphate</text>
        <dbReference type="Rhea" id="RHEA:19801"/>
        <dbReference type="ChEBI" id="CHEBI:15378"/>
        <dbReference type="ChEBI" id="CHEBI:30616"/>
        <dbReference type="ChEBI" id="CHEBI:33019"/>
        <dbReference type="ChEBI" id="CHEBI:57328"/>
        <dbReference type="ChEBI" id="CHEBI:61723"/>
        <dbReference type="EC" id="2.7.7.3"/>
    </reaction>
</comment>
<comment type="cofactor">
    <cofactor evidence="1">
        <name>Mg(2+)</name>
        <dbReference type="ChEBI" id="CHEBI:18420"/>
    </cofactor>
</comment>
<comment type="pathway">
    <text evidence="1">Cofactor biosynthesis; coenzyme A biosynthesis; CoA from (R)-pantothenate: step 4/5.</text>
</comment>
<comment type="subunit">
    <text evidence="1">Homohexamer.</text>
</comment>
<comment type="subcellular location">
    <subcellularLocation>
        <location evidence="1">Cytoplasm</location>
    </subcellularLocation>
</comment>
<comment type="similarity">
    <text evidence="1">Belongs to the bacterial CoaD family.</text>
</comment>
<organism>
    <name type="scientific">Macrococcus caseolyticus (strain JCSC5402)</name>
    <name type="common">Macrococcoides caseolyticum</name>
    <dbReference type="NCBI Taxonomy" id="458233"/>
    <lineage>
        <taxon>Bacteria</taxon>
        <taxon>Bacillati</taxon>
        <taxon>Bacillota</taxon>
        <taxon>Bacilli</taxon>
        <taxon>Bacillales</taxon>
        <taxon>Staphylococcaceae</taxon>
        <taxon>Macrococcoides</taxon>
    </lineage>
</organism>
<dbReference type="EC" id="2.7.7.3" evidence="1"/>
<dbReference type="EMBL" id="AP009484">
    <property type="protein sequence ID" value="BAH17453.1"/>
    <property type="molecule type" value="Genomic_DNA"/>
</dbReference>
<dbReference type="RefSeq" id="WP_012656654.1">
    <property type="nucleotide sequence ID" value="NC_011999.1"/>
</dbReference>
<dbReference type="SMR" id="B9EB42"/>
<dbReference type="STRING" id="458233.MCCL_0746"/>
<dbReference type="KEGG" id="mcl:MCCL_0746"/>
<dbReference type="eggNOG" id="COG0669">
    <property type="taxonomic scope" value="Bacteria"/>
</dbReference>
<dbReference type="HOGENOM" id="CLU_100149_0_1_9"/>
<dbReference type="OrthoDB" id="9806661at2"/>
<dbReference type="UniPathway" id="UPA00241">
    <property type="reaction ID" value="UER00355"/>
</dbReference>
<dbReference type="Proteomes" id="UP000001383">
    <property type="component" value="Chromosome"/>
</dbReference>
<dbReference type="GO" id="GO:0005737">
    <property type="term" value="C:cytoplasm"/>
    <property type="evidence" value="ECO:0007669"/>
    <property type="project" value="UniProtKB-SubCell"/>
</dbReference>
<dbReference type="GO" id="GO:0005524">
    <property type="term" value="F:ATP binding"/>
    <property type="evidence" value="ECO:0007669"/>
    <property type="project" value="UniProtKB-KW"/>
</dbReference>
<dbReference type="GO" id="GO:0004595">
    <property type="term" value="F:pantetheine-phosphate adenylyltransferase activity"/>
    <property type="evidence" value="ECO:0007669"/>
    <property type="project" value="UniProtKB-UniRule"/>
</dbReference>
<dbReference type="GO" id="GO:0015937">
    <property type="term" value="P:coenzyme A biosynthetic process"/>
    <property type="evidence" value="ECO:0007669"/>
    <property type="project" value="UniProtKB-UniRule"/>
</dbReference>
<dbReference type="CDD" id="cd02163">
    <property type="entry name" value="PPAT"/>
    <property type="match status" value="1"/>
</dbReference>
<dbReference type="Gene3D" id="3.40.50.620">
    <property type="entry name" value="HUPs"/>
    <property type="match status" value="1"/>
</dbReference>
<dbReference type="HAMAP" id="MF_00151">
    <property type="entry name" value="PPAT_bact"/>
    <property type="match status" value="1"/>
</dbReference>
<dbReference type="InterPro" id="IPR004821">
    <property type="entry name" value="Cyt_trans-like"/>
</dbReference>
<dbReference type="InterPro" id="IPR001980">
    <property type="entry name" value="PPAT"/>
</dbReference>
<dbReference type="InterPro" id="IPR014729">
    <property type="entry name" value="Rossmann-like_a/b/a_fold"/>
</dbReference>
<dbReference type="NCBIfam" id="TIGR01510">
    <property type="entry name" value="coaD_prev_kdtB"/>
    <property type="match status" value="1"/>
</dbReference>
<dbReference type="NCBIfam" id="TIGR00125">
    <property type="entry name" value="cyt_tran_rel"/>
    <property type="match status" value="1"/>
</dbReference>
<dbReference type="PANTHER" id="PTHR21342">
    <property type="entry name" value="PHOSPHOPANTETHEINE ADENYLYLTRANSFERASE"/>
    <property type="match status" value="1"/>
</dbReference>
<dbReference type="PANTHER" id="PTHR21342:SF1">
    <property type="entry name" value="PHOSPHOPANTETHEINE ADENYLYLTRANSFERASE"/>
    <property type="match status" value="1"/>
</dbReference>
<dbReference type="Pfam" id="PF01467">
    <property type="entry name" value="CTP_transf_like"/>
    <property type="match status" value="1"/>
</dbReference>
<dbReference type="PRINTS" id="PR01020">
    <property type="entry name" value="LPSBIOSNTHSS"/>
</dbReference>
<dbReference type="SUPFAM" id="SSF52374">
    <property type="entry name" value="Nucleotidylyl transferase"/>
    <property type="match status" value="1"/>
</dbReference>
<feature type="chain" id="PRO_1000203428" description="Phosphopantetheine adenylyltransferase">
    <location>
        <begin position="1"/>
        <end position="165"/>
    </location>
</feature>
<feature type="binding site" evidence="1">
    <location>
        <begin position="10"/>
        <end position="11"/>
    </location>
    <ligand>
        <name>ATP</name>
        <dbReference type="ChEBI" id="CHEBI:30616"/>
    </ligand>
</feature>
<feature type="binding site" evidence="1">
    <location>
        <position position="10"/>
    </location>
    <ligand>
        <name>substrate</name>
    </ligand>
</feature>
<feature type="binding site" evidence="1">
    <location>
        <position position="18"/>
    </location>
    <ligand>
        <name>ATP</name>
        <dbReference type="ChEBI" id="CHEBI:30616"/>
    </ligand>
</feature>
<feature type="binding site" evidence="1">
    <location>
        <position position="42"/>
    </location>
    <ligand>
        <name>substrate</name>
    </ligand>
</feature>
<feature type="binding site" evidence="1">
    <location>
        <position position="74"/>
    </location>
    <ligand>
        <name>substrate</name>
    </ligand>
</feature>
<feature type="binding site" evidence="1">
    <location>
        <position position="88"/>
    </location>
    <ligand>
        <name>substrate</name>
    </ligand>
</feature>
<feature type="binding site" evidence="1">
    <location>
        <begin position="89"/>
        <end position="91"/>
    </location>
    <ligand>
        <name>ATP</name>
        <dbReference type="ChEBI" id="CHEBI:30616"/>
    </ligand>
</feature>
<feature type="binding site" evidence="1">
    <location>
        <position position="99"/>
    </location>
    <ligand>
        <name>ATP</name>
        <dbReference type="ChEBI" id="CHEBI:30616"/>
    </ligand>
</feature>
<feature type="binding site" evidence="1">
    <location>
        <begin position="124"/>
        <end position="130"/>
    </location>
    <ligand>
        <name>ATP</name>
        <dbReference type="ChEBI" id="CHEBI:30616"/>
    </ligand>
</feature>
<feature type="site" description="Transition state stabilizer" evidence="1">
    <location>
        <position position="18"/>
    </location>
</feature>
<keyword id="KW-0067">ATP-binding</keyword>
<keyword id="KW-0173">Coenzyme A biosynthesis</keyword>
<keyword id="KW-0963">Cytoplasm</keyword>
<keyword id="KW-0460">Magnesium</keyword>
<keyword id="KW-0547">Nucleotide-binding</keyword>
<keyword id="KW-0548">Nucleotidyltransferase</keyword>
<keyword id="KW-1185">Reference proteome</keyword>
<keyword id="KW-0808">Transferase</keyword>
<proteinExistence type="inferred from homology"/>
<sequence length="165" mass="18560">MKNIAVIPGSFDPITLGHLDIIKRSAGLFDVVHVSVLNNASKQGFFTIEERIEMISEAVKDIPNVEVEYFQGLLVDYCNKVGAKQIVRGLRAVSDFEYEMQLTSMNKKLDDDLETLYMMTNNQYSFISSSMTKDVAKYGGDVSSIVPPNVELALKQKYAEINRRP</sequence>
<gene>
    <name evidence="1" type="primary">coaD</name>
    <name type="ordered locus">MCCL_0746</name>
</gene>